<protein>
    <recommendedName>
        <fullName evidence="1">ATP phosphoribosyltransferase</fullName>
        <shortName evidence="1">ATP-PRT</shortName>
        <shortName evidence="1">ATP-PRTase</shortName>
        <ecNumber evidence="1">2.4.2.17</ecNumber>
    </recommendedName>
</protein>
<gene>
    <name evidence="1" type="primary">hisG</name>
    <name type="ordered locus">MmarC5_0754</name>
</gene>
<feature type="chain" id="PRO_1000004472" description="ATP phosphoribosyltransferase">
    <location>
        <begin position="1"/>
        <end position="288"/>
    </location>
</feature>
<reference key="1">
    <citation type="submission" date="2007-03" db="EMBL/GenBank/DDBJ databases">
        <title>Complete sequence of chromosome of Methanococcus maripaludis C5.</title>
        <authorList>
            <consortium name="US DOE Joint Genome Institute"/>
            <person name="Copeland A."/>
            <person name="Lucas S."/>
            <person name="Lapidus A."/>
            <person name="Barry K."/>
            <person name="Glavina del Rio T."/>
            <person name="Dalin E."/>
            <person name="Tice H."/>
            <person name="Pitluck S."/>
            <person name="Chertkov O."/>
            <person name="Brettin T."/>
            <person name="Bruce D."/>
            <person name="Han C."/>
            <person name="Detter J.C."/>
            <person name="Schmutz J."/>
            <person name="Larimer F."/>
            <person name="Land M."/>
            <person name="Hauser L."/>
            <person name="Kyrpides N."/>
            <person name="Mikhailova N."/>
            <person name="Sieprawska-Lupa M."/>
            <person name="Whitman W.B."/>
            <person name="Richardson P."/>
        </authorList>
    </citation>
    <scope>NUCLEOTIDE SEQUENCE [LARGE SCALE GENOMIC DNA]</scope>
    <source>
        <strain>C5 / ATCC BAA-1333</strain>
    </source>
</reference>
<dbReference type="EC" id="2.4.2.17" evidence="1"/>
<dbReference type="EMBL" id="CP000609">
    <property type="protein sequence ID" value="ABO35064.1"/>
    <property type="molecule type" value="Genomic_DNA"/>
</dbReference>
<dbReference type="RefSeq" id="WP_011868518.1">
    <property type="nucleotide sequence ID" value="NC_009135.1"/>
</dbReference>
<dbReference type="SMR" id="A4FXY0"/>
<dbReference type="STRING" id="402880.MmarC5_0754"/>
<dbReference type="GeneID" id="4929127"/>
<dbReference type="KEGG" id="mmq:MmarC5_0754"/>
<dbReference type="eggNOG" id="arCOG02208">
    <property type="taxonomic scope" value="Archaea"/>
</dbReference>
<dbReference type="HOGENOM" id="CLU_038115_1_0_2"/>
<dbReference type="OrthoDB" id="33116at2157"/>
<dbReference type="UniPathway" id="UPA00031">
    <property type="reaction ID" value="UER00006"/>
</dbReference>
<dbReference type="Proteomes" id="UP000000253">
    <property type="component" value="Chromosome"/>
</dbReference>
<dbReference type="GO" id="GO:0005737">
    <property type="term" value="C:cytoplasm"/>
    <property type="evidence" value="ECO:0007669"/>
    <property type="project" value="UniProtKB-SubCell"/>
</dbReference>
<dbReference type="GO" id="GO:0005524">
    <property type="term" value="F:ATP binding"/>
    <property type="evidence" value="ECO:0007669"/>
    <property type="project" value="UniProtKB-KW"/>
</dbReference>
<dbReference type="GO" id="GO:0003879">
    <property type="term" value="F:ATP phosphoribosyltransferase activity"/>
    <property type="evidence" value="ECO:0007669"/>
    <property type="project" value="UniProtKB-UniRule"/>
</dbReference>
<dbReference type="GO" id="GO:0000287">
    <property type="term" value="F:magnesium ion binding"/>
    <property type="evidence" value="ECO:0007669"/>
    <property type="project" value="UniProtKB-UniRule"/>
</dbReference>
<dbReference type="GO" id="GO:0000105">
    <property type="term" value="P:L-histidine biosynthetic process"/>
    <property type="evidence" value="ECO:0007669"/>
    <property type="project" value="UniProtKB-UniRule"/>
</dbReference>
<dbReference type="FunFam" id="3.30.70.120:FF:000002">
    <property type="entry name" value="ATP phosphoribosyltransferase"/>
    <property type="match status" value="1"/>
</dbReference>
<dbReference type="FunFam" id="3.40.190.10:FF:000008">
    <property type="entry name" value="ATP phosphoribosyltransferase"/>
    <property type="match status" value="1"/>
</dbReference>
<dbReference type="Gene3D" id="3.30.70.120">
    <property type="match status" value="1"/>
</dbReference>
<dbReference type="Gene3D" id="3.40.190.10">
    <property type="entry name" value="Periplasmic binding protein-like II"/>
    <property type="match status" value="2"/>
</dbReference>
<dbReference type="HAMAP" id="MF_00079">
    <property type="entry name" value="HisG_Long"/>
    <property type="match status" value="1"/>
</dbReference>
<dbReference type="InterPro" id="IPR020621">
    <property type="entry name" value="ATP-PRT_HisG_long"/>
</dbReference>
<dbReference type="InterPro" id="IPR013820">
    <property type="entry name" value="ATP_PRibTrfase_cat"/>
</dbReference>
<dbReference type="InterPro" id="IPR018198">
    <property type="entry name" value="ATP_PRibTrfase_CS"/>
</dbReference>
<dbReference type="InterPro" id="IPR001348">
    <property type="entry name" value="ATP_PRibTrfase_HisG"/>
</dbReference>
<dbReference type="InterPro" id="IPR013115">
    <property type="entry name" value="HisG_C"/>
</dbReference>
<dbReference type="InterPro" id="IPR011322">
    <property type="entry name" value="N-reg_PII-like_a/b"/>
</dbReference>
<dbReference type="InterPro" id="IPR015867">
    <property type="entry name" value="N-reg_PII/ATP_PRibTrfase_C"/>
</dbReference>
<dbReference type="NCBIfam" id="TIGR00070">
    <property type="entry name" value="hisG"/>
    <property type="match status" value="1"/>
</dbReference>
<dbReference type="NCBIfam" id="TIGR03455">
    <property type="entry name" value="HisG_C-term"/>
    <property type="match status" value="1"/>
</dbReference>
<dbReference type="PANTHER" id="PTHR21403:SF10">
    <property type="entry name" value="ATP PHOSPHORIBOSYLTRANSFERASE"/>
    <property type="match status" value="1"/>
</dbReference>
<dbReference type="PANTHER" id="PTHR21403">
    <property type="entry name" value="ATP PHOSPHORIBOSYLTRANSFERASE ATP-PRTASE"/>
    <property type="match status" value="1"/>
</dbReference>
<dbReference type="Pfam" id="PF01634">
    <property type="entry name" value="HisG"/>
    <property type="match status" value="1"/>
</dbReference>
<dbReference type="Pfam" id="PF08029">
    <property type="entry name" value="HisG_C"/>
    <property type="match status" value="1"/>
</dbReference>
<dbReference type="SUPFAM" id="SSF54913">
    <property type="entry name" value="GlnB-like"/>
    <property type="match status" value="1"/>
</dbReference>
<dbReference type="SUPFAM" id="SSF53850">
    <property type="entry name" value="Periplasmic binding protein-like II"/>
    <property type="match status" value="1"/>
</dbReference>
<dbReference type="PROSITE" id="PS01316">
    <property type="entry name" value="ATP_P_PHORIBOSYLTR"/>
    <property type="match status" value="1"/>
</dbReference>
<keyword id="KW-0028">Amino-acid biosynthesis</keyword>
<keyword id="KW-0067">ATP-binding</keyword>
<keyword id="KW-0963">Cytoplasm</keyword>
<keyword id="KW-0328">Glycosyltransferase</keyword>
<keyword id="KW-0368">Histidine biosynthesis</keyword>
<keyword id="KW-0460">Magnesium</keyword>
<keyword id="KW-0479">Metal-binding</keyword>
<keyword id="KW-0547">Nucleotide-binding</keyword>
<keyword id="KW-0808">Transferase</keyword>
<sequence>MILLALPNKGRISKPVNEILEKAGLKISVHGRSLFAQTVDPEIKVMFARAKDIPEFVRDGVADVGVTGYDLMLERDTEEELEMLLDFKFGNARLVIAAPENSTVNSIEDVKDGMKIATEFPGLTKRYLEKKGLNLEIIELSGATEIAPFIGVSDLICDLTSTGTTLQLNRLKEVENVVSSTTRLVANKKSMDDPEKSAKINQVLSGIKSVLYAQSKRLIMMNAPKDKVSEITSIIPGMGGPTVSEILSNDKMLAINAVIDENKVFETVTNLERLGARDILVVPIERIL</sequence>
<accession>A4FXY0</accession>
<organism>
    <name type="scientific">Methanococcus maripaludis (strain C5 / ATCC BAA-1333)</name>
    <dbReference type="NCBI Taxonomy" id="402880"/>
    <lineage>
        <taxon>Archaea</taxon>
        <taxon>Methanobacteriati</taxon>
        <taxon>Methanobacteriota</taxon>
        <taxon>Methanomada group</taxon>
        <taxon>Methanococci</taxon>
        <taxon>Methanococcales</taxon>
        <taxon>Methanococcaceae</taxon>
        <taxon>Methanococcus</taxon>
    </lineage>
</organism>
<name>HIS1_METM5</name>
<comment type="function">
    <text evidence="1">Catalyzes the condensation of ATP and 5-phosphoribose 1-diphosphate to form N'-(5'-phosphoribosyl)-ATP (PR-ATP). Has a crucial role in the pathway because the rate of histidine biosynthesis seems to be controlled primarily by regulation of HisG enzymatic activity.</text>
</comment>
<comment type="catalytic activity">
    <reaction evidence="1">
        <text>1-(5-phospho-beta-D-ribosyl)-ATP + diphosphate = 5-phospho-alpha-D-ribose 1-diphosphate + ATP</text>
        <dbReference type="Rhea" id="RHEA:18473"/>
        <dbReference type="ChEBI" id="CHEBI:30616"/>
        <dbReference type="ChEBI" id="CHEBI:33019"/>
        <dbReference type="ChEBI" id="CHEBI:58017"/>
        <dbReference type="ChEBI" id="CHEBI:73183"/>
        <dbReference type="EC" id="2.4.2.17"/>
    </reaction>
</comment>
<comment type="cofactor">
    <cofactor evidence="1">
        <name>Mg(2+)</name>
        <dbReference type="ChEBI" id="CHEBI:18420"/>
    </cofactor>
</comment>
<comment type="activity regulation">
    <text evidence="1">Feedback inhibited by histidine.</text>
</comment>
<comment type="pathway">
    <text evidence="1">Amino-acid biosynthesis; L-histidine biosynthesis; L-histidine from 5-phospho-alpha-D-ribose 1-diphosphate: step 1/9.</text>
</comment>
<comment type="subcellular location">
    <subcellularLocation>
        <location evidence="1">Cytoplasm</location>
    </subcellularLocation>
</comment>
<comment type="similarity">
    <text evidence="1">Belongs to the ATP phosphoribosyltransferase family. Long subfamily.</text>
</comment>
<evidence type="ECO:0000255" key="1">
    <source>
        <dbReference type="HAMAP-Rule" id="MF_00079"/>
    </source>
</evidence>
<proteinExistence type="inferred from homology"/>